<gene>
    <name type="primary">Mog</name>
</gene>
<evidence type="ECO:0000250" key="1"/>
<evidence type="ECO:0000255" key="2"/>
<evidence type="ECO:0000255" key="3">
    <source>
        <dbReference type="PROSITE-ProRule" id="PRU00114"/>
    </source>
</evidence>
<evidence type="ECO:0000269" key="4">
    <source>
    </source>
</evidence>
<evidence type="ECO:0000305" key="5"/>
<evidence type="ECO:0007744" key="6">
    <source>
    </source>
</evidence>
<evidence type="ECO:0007829" key="7">
    <source>
        <dbReference type="PDB" id="1PKO"/>
    </source>
</evidence>
<evidence type="ECO:0007829" key="8">
    <source>
        <dbReference type="PDB" id="3CSP"/>
    </source>
</evidence>
<comment type="function">
    <text evidence="1">Mediates homophilic cell-cell adhesion (By similarity). Minor component of the myelin sheath. May be involved in completion and/or maintenance of the myelin sheath and in cell-cell communication.</text>
</comment>
<comment type="subunit">
    <text evidence="1">Homodimer.</text>
</comment>
<comment type="subcellular location">
    <subcellularLocation>
        <location>Membrane</location>
        <topology>Multi-pass membrane protein</topology>
    </subcellularLocation>
</comment>
<comment type="tissue specificity">
    <text>Found exclusively in the CNS, where it is localized on the surface of myelin and oligodendrocyte cytoplasmic membranes.</text>
</comment>
<comment type="developmental stage">
    <text>A peak of expression has been observed between postnatal days 15 and 25, coinciding with the period of active myelination.</text>
</comment>
<comment type="similarity">
    <text evidence="5">Belongs to the immunoglobulin superfamily. BTN/MOG family.</text>
</comment>
<comment type="caution">
    <text evidence="5">Do not confuse myelin-oligodendrocyte glycoprotein (MOG) with oligodendrocyte-myelin glycoprotein (OMG).</text>
</comment>
<accession>Q63345</accession>
<proteinExistence type="evidence at protein level"/>
<dbReference type="EMBL" id="M99485">
    <property type="protein sequence ID" value="AAA41628.1"/>
    <property type="molecule type" value="mRNA"/>
</dbReference>
<dbReference type="EMBL" id="L21995">
    <property type="protein sequence ID" value="AAF74786.1"/>
    <property type="molecule type" value="mRNA"/>
</dbReference>
<dbReference type="PIR" id="B47712">
    <property type="entry name" value="B47712"/>
</dbReference>
<dbReference type="PDB" id="1PKO">
    <property type="method" value="X-ray"/>
    <property type="resolution" value="1.45 A"/>
    <property type="chains" value="A=28-152"/>
</dbReference>
<dbReference type="PDB" id="1PKQ">
    <property type="method" value="X-ray"/>
    <property type="resolution" value="3.00 A"/>
    <property type="chains" value="E/J=28-152"/>
</dbReference>
<dbReference type="PDB" id="3CSP">
    <property type="method" value="X-ray"/>
    <property type="resolution" value="1.70 A"/>
    <property type="chains" value="A=27-152"/>
</dbReference>
<dbReference type="PDBsum" id="1PKO"/>
<dbReference type="PDBsum" id="1PKQ"/>
<dbReference type="PDBsum" id="3CSP"/>
<dbReference type="SMR" id="Q63345"/>
<dbReference type="FunCoup" id="Q63345">
    <property type="interactions" value="395"/>
</dbReference>
<dbReference type="IntAct" id="Q63345">
    <property type="interactions" value="1"/>
</dbReference>
<dbReference type="MINT" id="Q63345"/>
<dbReference type="STRING" id="10116.ENSRNOP00000001008"/>
<dbReference type="GlyCosmos" id="Q63345">
    <property type="glycosylation" value="1 site, 76 glycans"/>
</dbReference>
<dbReference type="GlyGen" id="Q63345">
    <property type="glycosylation" value="1 site, 74 N-linked glycans (1 site)"/>
</dbReference>
<dbReference type="iPTMnet" id="Q63345"/>
<dbReference type="PhosphoSitePlus" id="Q63345"/>
<dbReference type="SwissPalm" id="Q63345"/>
<dbReference type="PaxDb" id="10116-ENSRNOP00000001008"/>
<dbReference type="ABCD" id="Q63345">
    <property type="antibodies" value="12 sequenced antibodies"/>
</dbReference>
<dbReference type="UCSC" id="RGD:3102">
    <property type="organism name" value="rat"/>
</dbReference>
<dbReference type="AGR" id="RGD:3102"/>
<dbReference type="RGD" id="3102">
    <property type="gene designation" value="Mog"/>
</dbReference>
<dbReference type="eggNOG" id="ENOG502SQC1">
    <property type="taxonomic scope" value="Eukaryota"/>
</dbReference>
<dbReference type="InParanoid" id="Q63345"/>
<dbReference type="PhylomeDB" id="Q63345"/>
<dbReference type="EvolutionaryTrace" id="Q63345"/>
<dbReference type="PRO" id="PR:Q63345"/>
<dbReference type="Proteomes" id="UP000002494">
    <property type="component" value="Unplaced"/>
</dbReference>
<dbReference type="GO" id="GO:0009986">
    <property type="term" value="C:cell surface"/>
    <property type="evidence" value="ECO:0000314"/>
    <property type="project" value="RGD"/>
</dbReference>
<dbReference type="GO" id="GO:0009897">
    <property type="term" value="C:external side of plasma membrane"/>
    <property type="evidence" value="ECO:0000318"/>
    <property type="project" value="GO_Central"/>
</dbReference>
<dbReference type="GO" id="GO:0005102">
    <property type="term" value="F:signaling receptor binding"/>
    <property type="evidence" value="ECO:0000318"/>
    <property type="project" value="GO_Central"/>
</dbReference>
<dbReference type="GO" id="GO:0007155">
    <property type="term" value="P:cell adhesion"/>
    <property type="evidence" value="ECO:0007669"/>
    <property type="project" value="UniProtKB-KW"/>
</dbReference>
<dbReference type="GO" id="GO:0001817">
    <property type="term" value="P:regulation of cytokine production"/>
    <property type="evidence" value="ECO:0000318"/>
    <property type="project" value="GO_Central"/>
</dbReference>
<dbReference type="GO" id="GO:0051593">
    <property type="term" value="P:response to folic acid"/>
    <property type="evidence" value="ECO:0000270"/>
    <property type="project" value="RGD"/>
</dbReference>
<dbReference type="GO" id="GO:0033993">
    <property type="term" value="P:response to lipid"/>
    <property type="evidence" value="ECO:0000270"/>
    <property type="project" value="RGD"/>
</dbReference>
<dbReference type="GO" id="GO:0050852">
    <property type="term" value="P:T cell receptor signaling pathway"/>
    <property type="evidence" value="ECO:0000318"/>
    <property type="project" value="GO_Central"/>
</dbReference>
<dbReference type="CDD" id="cd05713">
    <property type="entry name" value="IgV_MOG_like"/>
    <property type="match status" value="1"/>
</dbReference>
<dbReference type="FunFam" id="2.60.40.10:FF:000183">
    <property type="entry name" value="Myelin-oligodendrocyte glycoprotein"/>
    <property type="match status" value="1"/>
</dbReference>
<dbReference type="Gene3D" id="2.60.40.10">
    <property type="entry name" value="Immunoglobulins"/>
    <property type="match status" value="1"/>
</dbReference>
<dbReference type="InterPro" id="IPR007110">
    <property type="entry name" value="Ig-like_dom"/>
</dbReference>
<dbReference type="InterPro" id="IPR036179">
    <property type="entry name" value="Ig-like_dom_sf"/>
</dbReference>
<dbReference type="InterPro" id="IPR013783">
    <property type="entry name" value="Ig-like_fold"/>
</dbReference>
<dbReference type="InterPro" id="IPR003599">
    <property type="entry name" value="Ig_sub"/>
</dbReference>
<dbReference type="InterPro" id="IPR013106">
    <property type="entry name" value="Ig_V-set"/>
</dbReference>
<dbReference type="InterPro" id="IPR050504">
    <property type="entry name" value="IgSF_BTN/MOG"/>
</dbReference>
<dbReference type="InterPro" id="IPR016663">
    <property type="entry name" value="Myelin-oligodendrocyte_glycop"/>
</dbReference>
<dbReference type="PANTHER" id="PTHR24100">
    <property type="entry name" value="BUTYROPHILIN"/>
    <property type="match status" value="1"/>
</dbReference>
<dbReference type="PANTHER" id="PTHR24100:SF71">
    <property type="entry name" value="MYELIN-OLIGODENDROCYTE GLYCOPROTEIN"/>
    <property type="match status" value="1"/>
</dbReference>
<dbReference type="Pfam" id="PF07686">
    <property type="entry name" value="V-set"/>
    <property type="match status" value="1"/>
</dbReference>
<dbReference type="PIRSF" id="PIRSF016522">
    <property type="entry name" value="MOG"/>
    <property type="match status" value="1"/>
</dbReference>
<dbReference type="SMART" id="SM00409">
    <property type="entry name" value="IG"/>
    <property type="match status" value="1"/>
</dbReference>
<dbReference type="SMART" id="SM00406">
    <property type="entry name" value="IGv"/>
    <property type="match status" value="1"/>
</dbReference>
<dbReference type="SUPFAM" id="SSF48726">
    <property type="entry name" value="Immunoglobulin"/>
    <property type="match status" value="1"/>
</dbReference>
<dbReference type="PROSITE" id="PS50835">
    <property type="entry name" value="IG_LIKE"/>
    <property type="match status" value="1"/>
</dbReference>
<reference key="1">
    <citation type="journal article" date="1992" name="J. Neurosci. Res.">
        <title>Myelin/oligodendrocyte glycoprotein is a unique member of the immunoglobulin superfamily.</title>
        <authorList>
            <person name="Gardinier M.V."/>
            <person name="Amiguet P."/>
            <person name="Linington C."/>
            <person name="Matthieu J.-M."/>
        </authorList>
    </citation>
    <scope>NUCLEOTIDE SEQUENCE [MRNA]</scope>
    <scope>PROTEIN SEQUENCE OF N-TERMINUS</scope>
</reference>
<reference key="2">
    <citation type="journal article" date="1993" name="Proc. Natl. Acad. Sci. U.S.A.">
        <title>Myelin/oligodendrocyte glycoprotein is a member of a subset of the immunoglobulin superfamily encoded within the major histocompatibility complex.</title>
        <authorList>
            <person name="Pham-Dinh D."/>
            <person name="Mattei M.-G."/>
            <person name="Nussbaum J.-L."/>
            <person name="Roussel G."/>
            <person name="Pontarotti P."/>
            <person name="Roeckel N."/>
            <person name="Mather I.H."/>
            <person name="Artzt K."/>
            <person name="Lindahl K.F."/>
            <person name="Dautigny A."/>
        </authorList>
    </citation>
    <scope>NUCLEOTIDE SEQUENCE [MRNA] OF 28-245</scope>
    <source>
        <tissue>Brain</tissue>
    </source>
</reference>
<reference key="3">
    <citation type="submission" date="2007-09" db="UniProtKB">
        <authorList>
            <person name="Lubec G."/>
            <person name="Kang S.U."/>
            <person name="Lubec S."/>
        </authorList>
    </citation>
    <scope>PROTEIN SEQUENCE OF 32-68; 83-93; 129-141; 186-193 AND 233-242</scope>
    <scope>IDENTIFICATION BY MASS SPECTROMETRY</scope>
    <source>
        <strain>Sprague-Dawley</strain>
        <tissue>Brain</tissue>
    </source>
</reference>
<reference key="4">
    <citation type="journal article" date="2013" name="J. Proteome Res.">
        <title>Site-specific glycan-peptide analysis for determination of N-glycoproteome heterogeneity.</title>
        <authorList>
            <person name="Parker B.L."/>
            <person name="Thaysen-Andersen M."/>
            <person name="Solis N."/>
            <person name="Scott N.E."/>
            <person name="Larsen M.R."/>
            <person name="Graham M.E."/>
            <person name="Packer N.H."/>
            <person name="Cordwell S.J."/>
        </authorList>
    </citation>
    <scope>GLYCOSYLATION [LARGE SCALE ANALYSIS] AT ASN-58</scope>
    <scope>IDENTIFICATION BY MASS SPECTROMETRY [LARGE SCALE ANALYSIS]</scope>
    <source>
        <tissue>Brain</tissue>
    </source>
</reference>
<reference key="5">
    <citation type="journal article" date="1997" name="Eur. J. Biochem.">
        <title>A conformational study of the human and rat encephalitogenic myelin oligodendrocyte glycoprotein peptides 35-55.</title>
        <authorList>
            <person name="Albouz-Abo S."/>
            <person name="Wilson J.C."/>
            <person name="Bernard C.C.A."/>
            <person name="von Itzstein M."/>
        </authorList>
    </citation>
    <scope>STRUCTURE BY NMR OF 62-82</scope>
</reference>
<name>MOG_RAT</name>
<protein>
    <recommendedName>
        <fullName>Myelin-oligodendrocyte glycoprotein</fullName>
    </recommendedName>
</protein>
<sequence>MAGVWSLSLPSCLLSLLLLLQLSRSYAGQFRVIGPGHPIRALVGDEAELPCRISPGKNATGMEVGWYRSPFSRVVHLYRNGKDQDAEQAPEYRGRTELLKESIGEGKVALRIQNVRFSDEGGYTCFFRDHSYQEEAAVELKVEDPFYWINPGVLALIALVPMLLLQVSVGLVFLFLQHRLRGKLRAEVENLHRTFDPHFLRVPCWKITLFVIVPVLGPLVALIICYNWLHRRLAGQFLEELRNPF</sequence>
<feature type="signal peptide" evidence="4">
    <location>
        <begin position="1"/>
        <end position="27"/>
    </location>
</feature>
<feature type="chain" id="PRO_0000014890" description="Myelin-oligodendrocyte glycoprotein">
    <location>
        <begin position="28"/>
        <end position="245"/>
    </location>
</feature>
<feature type="topological domain" description="Extracellular" evidence="2">
    <location>
        <begin position="28"/>
        <end position="155"/>
    </location>
</feature>
<feature type="transmembrane region" description="Helical" evidence="2">
    <location>
        <begin position="156"/>
        <end position="176"/>
    </location>
</feature>
<feature type="topological domain" description="Cytoplasmic" evidence="2">
    <location>
        <begin position="177"/>
        <end position="208"/>
    </location>
</feature>
<feature type="transmembrane region" description="Helical" evidence="2">
    <location>
        <begin position="209"/>
        <end position="229"/>
    </location>
</feature>
<feature type="topological domain" description="Extracellular" evidence="2">
    <location>
        <begin position="230"/>
        <end position="245"/>
    </location>
</feature>
<feature type="domain" description="Ig-like">
    <location>
        <begin position="30"/>
        <end position="139"/>
    </location>
</feature>
<feature type="glycosylation site" description="N-linked (GlcNAc...) asparagine" evidence="6">
    <location>
        <position position="58"/>
    </location>
</feature>
<feature type="disulfide bond" evidence="3">
    <location>
        <begin position="51"/>
        <end position="125"/>
    </location>
</feature>
<feature type="strand" evidence="7">
    <location>
        <begin position="31"/>
        <end position="33"/>
    </location>
</feature>
<feature type="strand" evidence="7">
    <location>
        <begin position="39"/>
        <end position="42"/>
    </location>
</feature>
<feature type="strand" evidence="7">
    <location>
        <begin position="47"/>
        <end position="55"/>
    </location>
</feature>
<feature type="strand" evidence="7">
    <location>
        <begin position="62"/>
        <end position="68"/>
    </location>
</feature>
<feature type="turn" evidence="8">
    <location>
        <begin position="69"/>
        <end position="72"/>
    </location>
</feature>
<feature type="strand" evidence="7">
    <location>
        <begin position="74"/>
        <end position="79"/>
    </location>
</feature>
<feature type="helix" evidence="7">
    <location>
        <begin position="85"/>
        <end position="87"/>
    </location>
</feature>
<feature type="turn" evidence="7">
    <location>
        <begin position="91"/>
        <end position="94"/>
    </location>
</feature>
<feature type="strand" evidence="7">
    <location>
        <begin position="95"/>
        <end position="99"/>
    </location>
</feature>
<feature type="helix" evidence="7">
    <location>
        <begin position="103"/>
        <end position="105"/>
    </location>
</feature>
<feature type="strand" evidence="7">
    <location>
        <begin position="107"/>
        <end position="114"/>
    </location>
</feature>
<feature type="helix" evidence="7">
    <location>
        <begin position="117"/>
        <end position="119"/>
    </location>
</feature>
<feature type="strand" evidence="7">
    <location>
        <begin position="121"/>
        <end position="129"/>
    </location>
</feature>
<feature type="strand" evidence="7">
    <location>
        <begin position="132"/>
        <end position="143"/>
    </location>
</feature>
<feature type="turn" evidence="7">
    <location>
        <begin position="145"/>
        <end position="148"/>
    </location>
</feature>
<organism>
    <name type="scientific">Rattus norvegicus</name>
    <name type="common">Rat</name>
    <dbReference type="NCBI Taxonomy" id="10116"/>
    <lineage>
        <taxon>Eukaryota</taxon>
        <taxon>Metazoa</taxon>
        <taxon>Chordata</taxon>
        <taxon>Craniata</taxon>
        <taxon>Vertebrata</taxon>
        <taxon>Euteleostomi</taxon>
        <taxon>Mammalia</taxon>
        <taxon>Eutheria</taxon>
        <taxon>Euarchontoglires</taxon>
        <taxon>Glires</taxon>
        <taxon>Rodentia</taxon>
        <taxon>Myomorpha</taxon>
        <taxon>Muroidea</taxon>
        <taxon>Muridae</taxon>
        <taxon>Murinae</taxon>
        <taxon>Rattus</taxon>
    </lineage>
</organism>
<keyword id="KW-0002">3D-structure</keyword>
<keyword id="KW-0130">Cell adhesion</keyword>
<keyword id="KW-0903">Direct protein sequencing</keyword>
<keyword id="KW-1015">Disulfide bond</keyword>
<keyword id="KW-0325">Glycoprotein</keyword>
<keyword id="KW-0393">Immunoglobulin domain</keyword>
<keyword id="KW-0472">Membrane</keyword>
<keyword id="KW-1185">Reference proteome</keyword>
<keyword id="KW-0732">Signal</keyword>
<keyword id="KW-0812">Transmembrane</keyword>
<keyword id="KW-1133">Transmembrane helix</keyword>